<reference key="1">
    <citation type="submission" date="2006-12" db="EMBL/GenBank/DDBJ databases">
        <title>Complete sequence of Mycobacterium vanbaalenii PYR-1.</title>
        <authorList>
            <consortium name="US DOE Joint Genome Institute"/>
            <person name="Copeland A."/>
            <person name="Lucas S."/>
            <person name="Lapidus A."/>
            <person name="Barry K."/>
            <person name="Detter J.C."/>
            <person name="Glavina del Rio T."/>
            <person name="Hammon N."/>
            <person name="Israni S."/>
            <person name="Dalin E."/>
            <person name="Tice H."/>
            <person name="Pitluck S."/>
            <person name="Singan V."/>
            <person name="Schmutz J."/>
            <person name="Larimer F."/>
            <person name="Land M."/>
            <person name="Hauser L."/>
            <person name="Kyrpides N."/>
            <person name="Anderson I.J."/>
            <person name="Miller C."/>
            <person name="Richardson P."/>
        </authorList>
    </citation>
    <scope>NUCLEOTIDE SEQUENCE [LARGE SCALE GENOMIC DNA]</scope>
    <source>
        <strain>DSM 7251 / JCM 13017 / BCRC 16820 / KCTC 9966 / NRRL B-24157 / PYR-1</strain>
    </source>
</reference>
<name>RL3_MYCVP</name>
<proteinExistence type="inferred from homology"/>
<feature type="chain" id="PRO_1000052094" description="Large ribosomal subunit protein uL3">
    <location>
        <begin position="1"/>
        <end position="218"/>
    </location>
</feature>
<feature type="region of interest" description="Disordered" evidence="2">
    <location>
        <begin position="133"/>
        <end position="158"/>
    </location>
</feature>
<comment type="function">
    <text evidence="1">One of the primary rRNA binding proteins, it binds directly near the 3'-end of the 23S rRNA, where it nucleates assembly of the 50S subunit.</text>
</comment>
<comment type="subunit">
    <text evidence="1">Part of the 50S ribosomal subunit. Forms a cluster with proteins L14 and L19.</text>
</comment>
<comment type="similarity">
    <text evidence="1">Belongs to the universal ribosomal protein uL3 family.</text>
</comment>
<protein>
    <recommendedName>
        <fullName evidence="1">Large ribosomal subunit protein uL3</fullName>
    </recommendedName>
    <alternativeName>
        <fullName evidence="3">50S ribosomal protein L3</fullName>
    </alternativeName>
</protein>
<evidence type="ECO:0000255" key="1">
    <source>
        <dbReference type="HAMAP-Rule" id="MF_01325"/>
    </source>
</evidence>
<evidence type="ECO:0000256" key="2">
    <source>
        <dbReference type="SAM" id="MobiDB-lite"/>
    </source>
</evidence>
<evidence type="ECO:0000305" key="3"/>
<sequence>MARKGILGTKLGMTQVFDENNKVVPVTVVKAGPNVVTRIRTPERDGYSAVQLAYGEISPRKVNKPVTGQYAAAGVNPRRHLAELRLDDEAAAAEYEVGQELTAEIFADGAYVDVTGTSKGKGFAGTMKRHGFRGQGASHGAQAVHRRPGSIGGCATPGRVFKGTRMSGRMGSDRVTTQNLKVHKVDAENGVLLIKGAIPGRNGGLVVVRSAIKRGEKA</sequence>
<organism>
    <name type="scientific">Mycolicibacterium vanbaalenii (strain DSM 7251 / JCM 13017 / BCRC 16820 / KCTC 9966 / NRRL B-24157 / PYR-1)</name>
    <name type="common">Mycobacterium vanbaalenii</name>
    <dbReference type="NCBI Taxonomy" id="350058"/>
    <lineage>
        <taxon>Bacteria</taxon>
        <taxon>Bacillati</taxon>
        <taxon>Actinomycetota</taxon>
        <taxon>Actinomycetes</taxon>
        <taxon>Mycobacteriales</taxon>
        <taxon>Mycobacteriaceae</taxon>
        <taxon>Mycolicibacterium</taxon>
    </lineage>
</organism>
<accession>A1T4N9</accession>
<keyword id="KW-0687">Ribonucleoprotein</keyword>
<keyword id="KW-0689">Ribosomal protein</keyword>
<keyword id="KW-0694">RNA-binding</keyword>
<keyword id="KW-0699">rRNA-binding</keyword>
<gene>
    <name evidence="1" type="primary">rplC</name>
    <name type="ordered locus">Mvan_1305</name>
</gene>
<dbReference type="EMBL" id="CP000511">
    <property type="protein sequence ID" value="ABM12139.1"/>
    <property type="molecule type" value="Genomic_DNA"/>
</dbReference>
<dbReference type="RefSeq" id="WP_011778570.1">
    <property type="nucleotide sequence ID" value="NZ_JACKSD010000069.1"/>
</dbReference>
<dbReference type="SMR" id="A1T4N9"/>
<dbReference type="STRING" id="350058.Mvan_1305"/>
<dbReference type="KEGG" id="mva:Mvan_1305"/>
<dbReference type="eggNOG" id="COG0087">
    <property type="taxonomic scope" value="Bacteria"/>
</dbReference>
<dbReference type="HOGENOM" id="CLU_044142_4_1_11"/>
<dbReference type="Proteomes" id="UP000009159">
    <property type="component" value="Chromosome"/>
</dbReference>
<dbReference type="GO" id="GO:0022625">
    <property type="term" value="C:cytosolic large ribosomal subunit"/>
    <property type="evidence" value="ECO:0007669"/>
    <property type="project" value="TreeGrafter"/>
</dbReference>
<dbReference type="GO" id="GO:0019843">
    <property type="term" value="F:rRNA binding"/>
    <property type="evidence" value="ECO:0007669"/>
    <property type="project" value="UniProtKB-UniRule"/>
</dbReference>
<dbReference type="GO" id="GO:0003735">
    <property type="term" value="F:structural constituent of ribosome"/>
    <property type="evidence" value="ECO:0007669"/>
    <property type="project" value="InterPro"/>
</dbReference>
<dbReference type="GO" id="GO:0006412">
    <property type="term" value="P:translation"/>
    <property type="evidence" value="ECO:0007669"/>
    <property type="project" value="UniProtKB-UniRule"/>
</dbReference>
<dbReference type="FunFam" id="2.40.30.10:FF:000004">
    <property type="entry name" value="50S ribosomal protein L3"/>
    <property type="match status" value="1"/>
</dbReference>
<dbReference type="FunFam" id="3.30.160.810:FF:000001">
    <property type="entry name" value="50S ribosomal protein L3"/>
    <property type="match status" value="1"/>
</dbReference>
<dbReference type="Gene3D" id="3.30.160.810">
    <property type="match status" value="1"/>
</dbReference>
<dbReference type="Gene3D" id="2.40.30.10">
    <property type="entry name" value="Translation factors"/>
    <property type="match status" value="1"/>
</dbReference>
<dbReference type="HAMAP" id="MF_01325_B">
    <property type="entry name" value="Ribosomal_uL3_B"/>
    <property type="match status" value="1"/>
</dbReference>
<dbReference type="InterPro" id="IPR000597">
    <property type="entry name" value="Ribosomal_uL3"/>
</dbReference>
<dbReference type="InterPro" id="IPR019927">
    <property type="entry name" value="Ribosomal_uL3_bac/org-type"/>
</dbReference>
<dbReference type="InterPro" id="IPR019926">
    <property type="entry name" value="Ribosomal_uL3_CS"/>
</dbReference>
<dbReference type="InterPro" id="IPR009000">
    <property type="entry name" value="Transl_B-barrel_sf"/>
</dbReference>
<dbReference type="NCBIfam" id="TIGR03625">
    <property type="entry name" value="L3_bact"/>
    <property type="match status" value="1"/>
</dbReference>
<dbReference type="PANTHER" id="PTHR11229">
    <property type="entry name" value="50S RIBOSOMAL PROTEIN L3"/>
    <property type="match status" value="1"/>
</dbReference>
<dbReference type="PANTHER" id="PTHR11229:SF16">
    <property type="entry name" value="LARGE RIBOSOMAL SUBUNIT PROTEIN UL3C"/>
    <property type="match status" value="1"/>
</dbReference>
<dbReference type="Pfam" id="PF00297">
    <property type="entry name" value="Ribosomal_L3"/>
    <property type="match status" value="1"/>
</dbReference>
<dbReference type="SUPFAM" id="SSF50447">
    <property type="entry name" value="Translation proteins"/>
    <property type="match status" value="1"/>
</dbReference>
<dbReference type="PROSITE" id="PS00474">
    <property type="entry name" value="RIBOSOMAL_L3"/>
    <property type="match status" value="1"/>
</dbReference>